<reference key="1">
    <citation type="journal article" date="2004" name="Nucleic Acids Res.">
        <title>The genome sequence of Bacillus cereus ATCC 10987 reveals metabolic adaptations and a large plasmid related to Bacillus anthracis pXO1.</title>
        <authorList>
            <person name="Rasko D.A."/>
            <person name="Ravel J."/>
            <person name="Oekstad O.A."/>
            <person name="Helgason E."/>
            <person name="Cer R.Z."/>
            <person name="Jiang L."/>
            <person name="Shores K.A."/>
            <person name="Fouts D.E."/>
            <person name="Tourasse N.J."/>
            <person name="Angiuoli S.V."/>
            <person name="Kolonay J.F."/>
            <person name="Nelson W.C."/>
            <person name="Kolstoe A.-B."/>
            <person name="Fraser C.M."/>
            <person name="Read T.D."/>
        </authorList>
    </citation>
    <scope>NUCLEOTIDE SEQUENCE [LARGE SCALE GENOMIC DNA]</scope>
    <source>
        <strain>ATCC 10987 / NRS 248</strain>
    </source>
</reference>
<protein>
    <recommendedName>
        <fullName evidence="1">Probable nicotinate-nucleotide adenylyltransferase</fullName>
        <ecNumber evidence="1">2.7.7.18</ecNumber>
    </recommendedName>
    <alternativeName>
        <fullName evidence="1">Deamido-NAD(+) diphosphorylase</fullName>
    </alternativeName>
    <alternativeName>
        <fullName evidence="1">Deamido-NAD(+) pyrophosphorylase</fullName>
    </alternativeName>
    <alternativeName>
        <fullName evidence="1">Nicotinate mononucleotide adenylyltransferase</fullName>
        <shortName evidence="1">NaMN adenylyltransferase</shortName>
    </alternativeName>
</protein>
<gene>
    <name evidence="1" type="primary">nadD</name>
    <name type="ordered locus">BCE_4413</name>
</gene>
<dbReference type="EC" id="2.7.7.18" evidence="1"/>
<dbReference type="EMBL" id="AE017194">
    <property type="protein sequence ID" value="AAS43314.1"/>
    <property type="molecule type" value="Genomic_DNA"/>
</dbReference>
<dbReference type="SMR" id="Q730K3"/>
<dbReference type="KEGG" id="bca:BCE_4413"/>
<dbReference type="HOGENOM" id="CLU_069765_3_1_9"/>
<dbReference type="UniPathway" id="UPA00253">
    <property type="reaction ID" value="UER00332"/>
</dbReference>
<dbReference type="Proteomes" id="UP000002527">
    <property type="component" value="Chromosome"/>
</dbReference>
<dbReference type="GO" id="GO:0005524">
    <property type="term" value="F:ATP binding"/>
    <property type="evidence" value="ECO:0007669"/>
    <property type="project" value="UniProtKB-KW"/>
</dbReference>
<dbReference type="GO" id="GO:0004515">
    <property type="term" value="F:nicotinate-nucleotide adenylyltransferase activity"/>
    <property type="evidence" value="ECO:0007669"/>
    <property type="project" value="UniProtKB-UniRule"/>
</dbReference>
<dbReference type="GO" id="GO:0009435">
    <property type="term" value="P:NAD biosynthetic process"/>
    <property type="evidence" value="ECO:0007669"/>
    <property type="project" value="UniProtKB-UniRule"/>
</dbReference>
<dbReference type="CDD" id="cd02165">
    <property type="entry name" value="NMNAT"/>
    <property type="match status" value="1"/>
</dbReference>
<dbReference type="FunFam" id="3.40.50.620:FF:000079">
    <property type="entry name" value="Probable nicotinate-nucleotide adenylyltransferase"/>
    <property type="match status" value="1"/>
</dbReference>
<dbReference type="Gene3D" id="3.40.50.620">
    <property type="entry name" value="HUPs"/>
    <property type="match status" value="1"/>
</dbReference>
<dbReference type="HAMAP" id="MF_00244">
    <property type="entry name" value="NaMN_adenylyltr"/>
    <property type="match status" value="1"/>
</dbReference>
<dbReference type="InterPro" id="IPR004821">
    <property type="entry name" value="Cyt_trans-like"/>
</dbReference>
<dbReference type="InterPro" id="IPR005248">
    <property type="entry name" value="NadD/NMNAT"/>
</dbReference>
<dbReference type="InterPro" id="IPR014729">
    <property type="entry name" value="Rossmann-like_a/b/a_fold"/>
</dbReference>
<dbReference type="NCBIfam" id="TIGR00125">
    <property type="entry name" value="cyt_tran_rel"/>
    <property type="match status" value="1"/>
</dbReference>
<dbReference type="NCBIfam" id="TIGR00482">
    <property type="entry name" value="nicotinate (nicotinamide) nucleotide adenylyltransferase"/>
    <property type="match status" value="1"/>
</dbReference>
<dbReference type="NCBIfam" id="NF000840">
    <property type="entry name" value="PRK00071.1-3"/>
    <property type="match status" value="1"/>
</dbReference>
<dbReference type="NCBIfam" id="NF000841">
    <property type="entry name" value="PRK00071.1-4"/>
    <property type="match status" value="1"/>
</dbReference>
<dbReference type="PANTHER" id="PTHR39321">
    <property type="entry name" value="NICOTINATE-NUCLEOTIDE ADENYLYLTRANSFERASE-RELATED"/>
    <property type="match status" value="1"/>
</dbReference>
<dbReference type="PANTHER" id="PTHR39321:SF3">
    <property type="entry name" value="PHOSPHOPANTETHEINE ADENYLYLTRANSFERASE"/>
    <property type="match status" value="1"/>
</dbReference>
<dbReference type="Pfam" id="PF01467">
    <property type="entry name" value="CTP_transf_like"/>
    <property type="match status" value="1"/>
</dbReference>
<dbReference type="SUPFAM" id="SSF52374">
    <property type="entry name" value="Nucleotidylyl transferase"/>
    <property type="match status" value="1"/>
</dbReference>
<proteinExistence type="inferred from homology"/>
<comment type="function">
    <text evidence="1">Catalyzes the reversible adenylation of nicotinate mononucleotide (NaMN) to nicotinic acid adenine dinucleotide (NaAD).</text>
</comment>
<comment type="catalytic activity">
    <reaction evidence="1">
        <text>nicotinate beta-D-ribonucleotide + ATP + H(+) = deamido-NAD(+) + diphosphate</text>
        <dbReference type="Rhea" id="RHEA:22860"/>
        <dbReference type="ChEBI" id="CHEBI:15378"/>
        <dbReference type="ChEBI" id="CHEBI:30616"/>
        <dbReference type="ChEBI" id="CHEBI:33019"/>
        <dbReference type="ChEBI" id="CHEBI:57502"/>
        <dbReference type="ChEBI" id="CHEBI:58437"/>
        <dbReference type="EC" id="2.7.7.18"/>
    </reaction>
</comment>
<comment type="pathway">
    <text evidence="1">Cofactor biosynthesis; NAD(+) biosynthesis; deamido-NAD(+) from nicotinate D-ribonucleotide: step 1/1.</text>
</comment>
<comment type="similarity">
    <text evidence="1">Belongs to the NadD family.</text>
</comment>
<evidence type="ECO:0000255" key="1">
    <source>
        <dbReference type="HAMAP-Rule" id="MF_00244"/>
    </source>
</evidence>
<keyword id="KW-0067">ATP-binding</keyword>
<keyword id="KW-0520">NAD</keyword>
<keyword id="KW-0547">Nucleotide-binding</keyword>
<keyword id="KW-0548">Nucleotidyltransferase</keyword>
<keyword id="KW-0662">Pyridine nucleotide biosynthesis</keyword>
<keyword id="KW-0808">Transferase</keyword>
<feature type="chain" id="PRO_0000181379" description="Probable nicotinate-nucleotide adenylyltransferase">
    <location>
        <begin position="1"/>
        <end position="189"/>
    </location>
</feature>
<organism>
    <name type="scientific">Bacillus cereus (strain ATCC 10987 / NRS 248)</name>
    <dbReference type="NCBI Taxonomy" id="222523"/>
    <lineage>
        <taxon>Bacteria</taxon>
        <taxon>Bacillati</taxon>
        <taxon>Bacillota</taxon>
        <taxon>Bacilli</taxon>
        <taxon>Bacillales</taxon>
        <taxon>Bacillaceae</taxon>
        <taxon>Bacillus</taxon>
        <taxon>Bacillus cereus group</taxon>
    </lineage>
</organism>
<accession>Q730K3</accession>
<name>NADD_BACC1</name>
<sequence length="189" mass="22000">MRKIGIIGGTFDPPHYGHLLIANEVYHALNLEEVWFLPNQIPPHKQGRNITSVESRLQMLELATEEEEHFSICLEELSRKGPSYTYDTMLQLTKKHPDVQFHFIIGGDMVEYLPKWYNIEMLLNLVTFVGVARPGYTLHTPYPITTVEIPEFAVSSSLLRERYKEKKTCKYLLPEKVQVYIERNGLYES</sequence>